<comment type="function">
    <text evidence="1 2 6">Component of the ribosome quality control complex (RQC), a ribosome-associated complex that mediates ubiquitination and extraction of incompletely synthesized nascent chains for proteasomal degradation (PubMed:30244831). In the RQC complex, required to promote formation of 'Lys-48'-linked polyubiquitin chains during ubiquitination of incompletely synthesized proteins by LTN1 (PubMed:30244831). May negatively regulate the calcineurin-NFAT signaling cascade by suppressing the activity of transcription factor NFATC4 (By similarity). May play a role in cell death control (By similarity).</text>
</comment>
<comment type="subunit">
    <text evidence="1 2 6">Component of the ribosome quality control complex (RQC), composed of the E3 ubiquitin ligase LTN1, TCF25 and NEMF associated with the 60S ribosomal subunit (PubMed:30244831). Interacts (via C-terminus) with NFATC4; the interaction leads to suppresson of NFATC4 transcription factor activity and is reduced following stimulation with angiotensin-2 (By similarity). Interacts with XIAP (By similarity).</text>
</comment>
<comment type="interaction">
    <interactant intactId="EBI-745182">
        <id>Q9BQ70</id>
    </interactant>
    <interactant intactId="EBI-743771">
        <id>Q92624</id>
        <label>APPBP2</label>
    </interactant>
    <organismsDiffer>false</organismsDiffer>
    <experiments>3</experiments>
</comment>
<comment type="interaction">
    <interactant intactId="EBI-745182">
        <id>Q9BQ70</id>
    </interactant>
    <interactant intactId="EBI-398977">
        <id>Q9BUN8</id>
        <label>DERL1</label>
    </interactant>
    <organismsDiffer>false</organismsDiffer>
    <experiments>3</experiments>
</comment>
<comment type="interaction">
    <interactant intactId="EBI-745182">
        <id>Q9BQ70</id>
    </interactant>
    <interactant intactId="EBI-473189">
        <id>Q96D09</id>
        <label>GPRASP2</label>
    </interactant>
    <organismsDiffer>false</organismsDiffer>
    <experiments>11</experiments>
</comment>
<comment type="interaction">
    <interactant intactId="EBI-745182">
        <id>Q9BQ70</id>
    </interactant>
    <interactant intactId="EBI-749411">
        <id>Q96SL4</id>
        <label>GPX7</label>
    </interactant>
    <organismsDiffer>false</organismsDiffer>
    <experiments>3</experiments>
</comment>
<comment type="interaction">
    <interactant intactId="EBI-745182">
        <id>Q9BQ70</id>
    </interactant>
    <interactant intactId="EBI-749265">
        <id>Q8N6L0</id>
        <label>KASH5</label>
    </interactant>
    <organismsDiffer>false</organismsDiffer>
    <experiments>3</experiments>
</comment>
<comment type="interaction">
    <interactant intactId="EBI-745182">
        <id>Q9BQ70</id>
    </interactant>
    <interactant intactId="EBI-10975473">
        <id>O60333-2</id>
        <label>KIF1B</label>
    </interactant>
    <organismsDiffer>false</organismsDiffer>
    <experiments>3</experiments>
</comment>
<comment type="interaction">
    <interactant intactId="EBI-745182">
        <id>Q9BQ70</id>
    </interactant>
    <interactant intactId="EBI-5323863">
        <id>Q5S007</id>
        <label>LRRK2</label>
    </interactant>
    <organismsDiffer>false</organismsDiffer>
    <experiments>3</experiments>
</comment>
<comment type="interaction">
    <interactant intactId="EBI-745182">
        <id>Q9BQ70</id>
    </interactant>
    <interactant intactId="EBI-739552">
        <id>P43364</id>
        <label>MAGEA11</label>
    </interactant>
    <organismsDiffer>false</organismsDiffer>
    <experiments>5</experiments>
</comment>
<comment type="interaction">
    <interactant intactId="EBI-745182">
        <id>Q9BQ70</id>
    </interactant>
    <interactant intactId="EBI-10178634">
        <id>P43364-2</id>
        <label>MAGEA11</label>
    </interactant>
    <organismsDiffer>false</organismsDiffer>
    <experiments>3</experiments>
</comment>
<comment type="interaction">
    <interactant intactId="EBI-745182">
        <id>Q9BQ70</id>
    </interactant>
    <interactant intactId="EBI-711613">
        <id>P21673</id>
        <label>SAT1</label>
    </interactant>
    <organismsDiffer>false</organismsDiffer>
    <experiments>11</experiments>
</comment>
<comment type="interaction">
    <interactant intactId="EBI-745182">
        <id>Q9BQ70</id>
    </interactant>
    <interactant intactId="EBI-720609">
        <id>O76024</id>
        <label>WFS1</label>
    </interactant>
    <organismsDiffer>false</organismsDiffer>
    <experiments>3</experiments>
</comment>
<comment type="subcellular location">
    <subcellularLocation>
        <location evidence="4 5">Nucleus</location>
    </subcellularLocation>
    <subcellularLocation>
        <location evidence="5">Cytoplasm</location>
        <location evidence="5">Cytosol</location>
    </subcellularLocation>
    <text evidence="5">Mainly nuclear.</text>
</comment>
<comment type="tissue specificity">
    <text evidence="4 7">In the embryo, widely expressed with highest levels in brain (PubMed:16574069). In the adult, highest expression is found in the heart (PubMed:16574069, PubMed:32805187). Repressed in cardiac tissue of patients with heart failure (at protein level) (PubMed:32805187). mRNA levels in the heart are unchanged in patients with heart failure (PubMed:32805187).</text>
</comment>
<comment type="similarity">
    <text evidence="12">Belongs to the TCF25 family.</text>
</comment>
<comment type="caution">
    <text evidence="4 12">Was reported to have DNA-binding activity (PubMed:16574069). However, this is uncertain as it was shown with the protein fused to the yeast GAL4 DNA-binding domain.</text>
</comment>
<reference key="1">
    <citation type="journal article" date="2006" name="Biochem. Biophys. Res. Commun.">
        <title>hnulp1, a basic helix-loop-helix protein with a novel transcriptional repressive domain, inhibits transcriptional activity of serum response factor.</title>
        <authorList>
            <person name="Cai Z."/>
            <person name="Wang Y."/>
            <person name="Yu W."/>
            <person name="Xiao J."/>
            <person name="Li Y."/>
            <person name="Liu L."/>
            <person name="Zhu C."/>
            <person name="Tan K."/>
            <person name="Deng Y."/>
            <person name="Yuan W."/>
            <person name="Liu M."/>
            <person name="Wu X."/>
        </authorList>
    </citation>
    <scope>NUCLEOTIDE SEQUENCE [MRNA]</scope>
    <scope>SUBCELLULAR LOCATION</scope>
    <scope>TISSUE SPECIFICITY</scope>
</reference>
<reference key="2">
    <citation type="submission" date="2000-11" db="EMBL/GenBank/DDBJ databases">
        <title>Characterization of FKSG26, a novel gene located on human chromosome 16q24.3.</title>
        <authorList>
            <person name="Wang Y.-G."/>
            <person name="Gong L."/>
        </authorList>
    </citation>
    <scope>NUCLEOTIDE SEQUENCE [MRNA]</scope>
</reference>
<reference key="3">
    <citation type="journal article" date="2004" name="Genome Res.">
        <title>The status, quality, and expansion of the NIH full-length cDNA project: the Mammalian Gene Collection (MGC).</title>
        <authorList>
            <consortium name="The MGC Project Team"/>
        </authorList>
    </citation>
    <scope>NUCLEOTIDE SEQUENCE [LARGE SCALE MRNA]</scope>
    <source>
        <tissue>Brain</tissue>
        <tissue>Lymph</tissue>
        <tissue>Muscle</tissue>
    </source>
</reference>
<reference key="4">
    <citation type="journal article" date="1999" name="DNA Res.">
        <title>Prediction of the coding sequences of unidentified human genes. XIV. The complete sequences of 100 new cDNA clones from brain which code for large proteins in vitro.</title>
        <authorList>
            <person name="Kikuno R."/>
            <person name="Nagase T."/>
            <person name="Ishikawa K."/>
            <person name="Hirosawa M."/>
            <person name="Miyajima N."/>
            <person name="Tanaka A."/>
            <person name="Kotani H."/>
            <person name="Nomura N."/>
            <person name="Ohara O."/>
        </authorList>
    </citation>
    <scope>NUCLEOTIDE SEQUENCE [LARGE SCALE MRNA] OF 127-676</scope>
    <source>
        <tissue>Brain</tissue>
    </source>
</reference>
<reference key="5">
    <citation type="journal article" date="2008" name="Biochem. Biophys. Res. Commun.">
        <title>Nuclear localized protein-1 (Nulp1) increases cell death of human osteosarcoma cells and binds the X-linked inhibitor of apoptosis protein.</title>
        <authorList>
            <person name="Steen H."/>
            <person name="Lindholm D."/>
        </authorList>
    </citation>
    <scope>SUBCELLULAR LOCATION</scope>
</reference>
<reference key="6">
    <citation type="journal article" date="2008" name="Proc. Natl. Acad. Sci. U.S.A.">
        <title>A quantitative atlas of mitotic phosphorylation.</title>
        <authorList>
            <person name="Dephoure N."/>
            <person name="Zhou C."/>
            <person name="Villen J."/>
            <person name="Beausoleil S.A."/>
            <person name="Bakalarski C.E."/>
            <person name="Elledge S.J."/>
            <person name="Gygi S.P."/>
        </authorList>
    </citation>
    <scope>PHOSPHORYLATION [LARGE SCALE ANALYSIS] AT SER-602</scope>
    <scope>IDENTIFICATION BY MASS SPECTROMETRY [LARGE SCALE ANALYSIS]</scope>
    <source>
        <tissue>Cervix carcinoma</tissue>
    </source>
</reference>
<reference key="7">
    <citation type="journal article" date="2010" name="Sci. Signal.">
        <title>Quantitative phosphoproteomics reveals widespread full phosphorylation site occupancy during mitosis.</title>
        <authorList>
            <person name="Olsen J.V."/>
            <person name="Vermeulen M."/>
            <person name="Santamaria A."/>
            <person name="Kumar C."/>
            <person name="Miller M.L."/>
            <person name="Jensen L.J."/>
            <person name="Gnad F."/>
            <person name="Cox J."/>
            <person name="Jensen T.S."/>
            <person name="Nigg E.A."/>
            <person name="Brunak S."/>
            <person name="Mann M."/>
        </authorList>
    </citation>
    <scope>PHOSPHORYLATION [LARGE SCALE ANALYSIS] AT SER-602</scope>
    <scope>IDENTIFICATION BY MASS SPECTROMETRY [LARGE SCALE ANALYSIS]</scope>
    <source>
        <tissue>Cervix carcinoma</tissue>
    </source>
</reference>
<reference key="8">
    <citation type="journal article" date="2011" name="BMC Syst. Biol.">
        <title>Initial characterization of the human central proteome.</title>
        <authorList>
            <person name="Burkard T.R."/>
            <person name="Planyavsky M."/>
            <person name="Kaupe I."/>
            <person name="Breitwieser F.P."/>
            <person name="Buerckstuemmer T."/>
            <person name="Bennett K.L."/>
            <person name="Superti-Furga G."/>
            <person name="Colinge J."/>
        </authorList>
    </citation>
    <scope>IDENTIFICATION BY MASS SPECTROMETRY [LARGE SCALE ANALYSIS]</scope>
</reference>
<reference key="9">
    <citation type="journal article" date="2013" name="J. Proteome Res.">
        <title>Toward a comprehensive characterization of a human cancer cell phosphoproteome.</title>
        <authorList>
            <person name="Zhou H."/>
            <person name="Di Palma S."/>
            <person name="Preisinger C."/>
            <person name="Peng M."/>
            <person name="Polat A.N."/>
            <person name="Heck A.J."/>
            <person name="Mohammed S."/>
        </authorList>
    </citation>
    <scope>PHOSPHORYLATION [LARGE SCALE ANALYSIS] AT SER-602</scope>
    <scope>IDENTIFICATION BY MASS SPECTROMETRY [LARGE SCALE ANALYSIS]</scope>
    <source>
        <tissue>Erythroleukemia</tissue>
    </source>
</reference>
<reference key="10">
    <citation type="journal article" date="2014" name="J. Proteomics">
        <title>An enzyme assisted RP-RPLC approach for in-depth analysis of human liver phosphoproteome.</title>
        <authorList>
            <person name="Bian Y."/>
            <person name="Song C."/>
            <person name="Cheng K."/>
            <person name="Dong M."/>
            <person name="Wang F."/>
            <person name="Huang J."/>
            <person name="Sun D."/>
            <person name="Wang L."/>
            <person name="Ye M."/>
            <person name="Zou H."/>
        </authorList>
    </citation>
    <scope>IDENTIFICATION BY MASS SPECTROMETRY [LARGE SCALE ANALYSIS]</scope>
    <source>
        <tissue>Liver</tissue>
    </source>
</reference>
<reference key="11">
    <citation type="journal article" date="2018" name="Mol. Cell">
        <title>Release of ubiquitinated and non-ubiquitinated nascent chains from stalled mammalian ribosomal complexes by ANKZF1 and Ptrh1.</title>
        <authorList>
            <person name="Kuroha K."/>
            <person name="Zinoviev A."/>
            <person name="Hellen C.U.T."/>
            <person name="Pestova T.V."/>
        </authorList>
    </citation>
    <scope>FUNCTION</scope>
    <scope>IDENTIFICATION IN THE RQC COMPLEX</scope>
</reference>
<reference key="12">
    <citation type="journal article" date="2020" name="J. Am. Heart Assoc.">
        <title>NULP1 Alleviates Cardiac Hypertrophy by Suppressing NFAT3 Transcriptional Activity.</title>
        <authorList>
            <person name="Zhang X."/>
            <person name="Lei F."/>
            <person name="Wang X.M."/>
            <person name="Deng K.Q."/>
            <person name="Ji Y.X."/>
            <person name="Zhang Y."/>
            <person name="Li H."/>
            <person name="Zhang X.D."/>
            <person name="Lu Z."/>
            <person name="Zhang P."/>
        </authorList>
    </citation>
    <scope>TISSUE SPECIFICITY</scope>
</reference>
<dbReference type="EMBL" id="DQ321703">
    <property type="protein sequence ID" value="ABC55265.1"/>
    <property type="molecule type" value="mRNA"/>
</dbReference>
<dbReference type="EMBL" id="AF322111">
    <property type="protein sequence ID" value="AAG50276.1"/>
    <property type="molecule type" value="mRNA"/>
</dbReference>
<dbReference type="EMBL" id="BC000959">
    <property type="protein sequence ID" value="AAH00959.1"/>
    <property type="molecule type" value="mRNA"/>
</dbReference>
<dbReference type="EMBL" id="BC009349">
    <property type="protein sequence ID" value="AAH09349.1"/>
    <property type="molecule type" value="mRNA"/>
</dbReference>
<dbReference type="EMBL" id="BC011884">
    <property type="protein sequence ID" value="AAH11884.1"/>
    <property type="molecule type" value="mRNA"/>
</dbReference>
<dbReference type="EMBL" id="AB028972">
    <property type="protein sequence ID" value="BAA83001.1"/>
    <property type="molecule type" value="mRNA"/>
</dbReference>
<dbReference type="CCDS" id="CCDS10987.1"/>
<dbReference type="RefSeq" id="NP_055787.1">
    <property type="nucleotide sequence ID" value="NM_014972.3"/>
</dbReference>
<dbReference type="SMR" id="Q9BQ70"/>
<dbReference type="BioGRID" id="116629">
    <property type="interactions" value="103"/>
</dbReference>
<dbReference type="ComplexPortal" id="CPX-2656">
    <property type="entry name" value="Ribosome quality control complex"/>
</dbReference>
<dbReference type="FunCoup" id="Q9BQ70">
    <property type="interactions" value="3408"/>
</dbReference>
<dbReference type="IntAct" id="Q9BQ70">
    <property type="interactions" value="61"/>
</dbReference>
<dbReference type="MINT" id="Q9BQ70"/>
<dbReference type="STRING" id="9606.ENSP00000263346"/>
<dbReference type="GlyGen" id="Q9BQ70">
    <property type="glycosylation" value="1 site, 1 O-linked glycan (1 site)"/>
</dbReference>
<dbReference type="iPTMnet" id="Q9BQ70"/>
<dbReference type="MetOSite" id="Q9BQ70"/>
<dbReference type="PhosphoSitePlus" id="Q9BQ70"/>
<dbReference type="BioMuta" id="TCF25"/>
<dbReference type="DMDM" id="23396596"/>
<dbReference type="jPOST" id="Q9BQ70"/>
<dbReference type="MassIVE" id="Q9BQ70"/>
<dbReference type="PaxDb" id="9606-ENSP00000263346"/>
<dbReference type="PeptideAtlas" id="Q9BQ70"/>
<dbReference type="ProteomicsDB" id="78638"/>
<dbReference type="Pumba" id="Q9BQ70"/>
<dbReference type="Antibodypedia" id="30955">
    <property type="antibodies" value="204 antibodies from 27 providers"/>
</dbReference>
<dbReference type="DNASU" id="22980"/>
<dbReference type="Ensembl" id="ENST00000263346.13">
    <property type="protein sequence ID" value="ENSP00000263346.8"/>
    <property type="gene ID" value="ENSG00000141002.20"/>
</dbReference>
<dbReference type="Ensembl" id="ENST00000640279.1">
    <property type="protein sequence ID" value="ENSP00000491638.1"/>
    <property type="gene ID" value="ENSG00000141002.20"/>
</dbReference>
<dbReference type="GeneID" id="22980"/>
<dbReference type="KEGG" id="hsa:22980"/>
<dbReference type="MANE-Select" id="ENST00000263346.13">
    <property type="protein sequence ID" value="ENSP00000263346.8"/>
    <property type="RefSeq nucleotide sequence ID" value="NM_014972.3"/>
    <property type="RefSeq protein sequence ID" value="NP_055787.1"/>
</dbReference>
<dbReference type="UCSC" id="uc002fpb.3">
    <property type="organism name" value="human"/>
</dbReference>
<dbReference type="AGR" id="HGNC:29181"/>
<dbReference type="CTD" id="22980"/>
<dbReference type="DisGeNET" id="22980"/>
<dbReference type="GeneCards" id="TCF25"/>
<dbReference type="HGNC" id="HGNC:29181">
    <property type="gene designation" value="TCF25"/>
</dbReference>
<dbReference type="HPA" id="ENSG00000141002">
    <property type="expression patterns" value="Low tissue specificity"/>
</dbReference>
<dbReference type="MIM" id="612326">
    <property type="type" value="gene"/>
</dbReference>
<dbReference type="neXtProt" id="NX_Q9BQ70"/>
<dbReference type="OpenTargets" id="ENSG00000141002"/>
<dbReference type="PharmGKB" id="PA145007492"/>
<dbReference type="VEuPathDB" id="HostDB:ENSG00000141002"/>
<dbReference type="eggNOG" id="KOG2422">
    <property type="taxonomic scope" value="Eukaryota"/>
</dbReference>
<dbReference type="GeneTree" id="ENSGT00390000005563"/>
<dbReference type="HOGENOM" id="CLU_008321_3_2_1"/>
<dbReference type="InParanoid" id="Q9BQ70"/>
<dbReference type="OMA" id="IWGKMPP"/>
<dbReference type="OrthoDB" id="205993at2759"/>
<dbReference type="PAN-GO" id="Q9BQ70">
    <property type="GO annotations" value="1 GO annotation based on evolutionary models"/>
</dbReference>
<dbReference type="PhylomeDB" id="Q9BQ70"/>
<dbReference type="TreeFam" id="TF106155"/>
<dbReference type="PathwayCommons" id="Q9BQ70"/>
<dbReference type="SignaLink" id="Q9BQ70"/>
<dbReference type="SIGNOR" id="Q9BQ70"/>
<dbReference type="BioGRID-ORCS" id="22980">
    <property type="hits" value="16 hits in 1160 CRISPR screens"/>
</dbReference>
<dbReference type="ChiTaRS" id="TCF25">
    <property type="organism name" value="human"/>
</dbReference>
<dbReference type="GenomeRNAi" id="22980"/>
<dbReference type="Pharos" id="Q9BQ70">
    <property type="development level" value="Tbio"/>
</dbReference>
<dbReference type="PRO" id="PR:Q9BQ70"/>
<dbReference type="Proteomes" id="UP000005640">
    <property type="component" value="Chromosome 16"/>
</dbReference>
<dbReference type="RNAct" id="Q9BQ70">
    <property type="molecule type" value="protein"/>
</dbReference>
<dbReference type="Bgee" id="ENSG00000141002">
    <property type="expression patterns" value="Expressed in sural nerve and 202 other cell types or tissues"/>
</dbReference>
<dbReference type="ExpressionAtlas" id="Q9BQ70">
    <property type="expression patterns" value="baseline and differential"/>
</dbReference>
<dbReference type="GO" id="GO:0005829">
    <property type="term" value="C:cytosol"/>
    <property type="evidence" value="ECO:0007669"/>
    <property type="project" value="UniProtKB-SubCell"/>
</dbReference>
<dbReference type="GO" id="GO:0005634">
    <property type="term" value="C:nucleus"/>
    <property type="evidence" value="ECO:0007669"/>
    <property type="project" value="UniProtKB-SubCell"/>
</dbReference>
<dbReference type="GO" id="GO:1990112">
    <property type="term" value="C:RQC complex"/>
    <property type="evidence" value="ECO:0000314"/>
    <property type="project" value="UniProtKB"/>
</dbReference>
<dbReference type="GO" id="GO:0003677">
    <property type="term" value="F:DNA binding"/>
    <property type="evidence" value="ECO:0007669"/>
    <property type="project" value="UniProtKB-KW"/>
</dbReference>
<dbReference type="GO" id="GO:0061945">
    <property type="term" value="P:regulation of protein K48-linked ubiquitination"/>
    <property type="evidence" value="ECO:0000314"/>
    <property type="project" value="UniProtKB"/>
</dbReference>
<dbReference type="GO" id="GO:0072344">
    <property type="term" value="P:rescue of stalled ribosome"/>
    <property type="evidence" value="ECO:0000314"/>
    <property type="project" value="UniProtKB"/>
</dbReference>
<dbReference type="FunFam" id="1.25.40.10:FF:000483">
    <property type="entry name" value="Transcription factor 25"/>
    <property type="match status" value="1"/>
</dbReference>
<dbReference type="Gene3D" id="1.25.40.10">
    <property type="entry name" value="Tetratricopeptide repeat domain"/>
    <property type="match status" value="1"/>
</dbReference>
<dbReference type="InterPro" id="IPR006994">
    <property type="entry name" value="TCF25/Rqc1"/>
</dbReference>
<dbReference type="InterPro" id="IPR011990">
    <property type="entry name" value="TPR-like_helical_dom_sf"/>
</dbReference>
<dbReference type="PANTHER" id="PTHR22684">
    <property type="entry name" value="NULP1-RELATED"/>
    <property type="match status" value="1"/>
</dbReference>
<dbReference type="PANTHER" id="PTHR22684:SF0">
    <property type="entry name" value="RIBOSOME QUALITY CONTROL COMPLEX SUBUNIT TCF25"/>
    <property type="match status" value="1"/>
</dbReference>
<dbReference type="Pfam" id="PF04910">
    <property type="entry name" value="Tcf25"/>
    <property type="match status" value="1"/>
</dbReference>
<dbReference type="SUPFAM" id="SSF48452">
    <property type="entry name" value="TPR-like"/>
    <property type="match status" value="1"/>
</dbReference>
<evidence type="ECO:0000250" key="1">
    <source>
        <dbReference type="UniProtKB" id="A0A8I6ASZ5"/>
    </source>
</evidence>
<evidence type="ECO:0000250" key="2">
    <source>
        <dbReference type="UniProtKB" id="Q8R3L2"/>
    </source>
</evidence>
<evidence type="ECO:0000256" key="3">
    <source>
        <dbReference type="SAM" id="MobiDB-lite"/>
    </source>
</evidence>
<evidence type="ECO:0000269" key="4">
    <source>
    </source>
</evidence>
<evidence type="ECO:0000269" key="5">
    <source>
    </source>
</evidence>
<evidence type="ECO:0000269" key="6">
    <source>
    </source>
</evidence>
<evidence type="ECO:0000269" key="7">
    <source>
    </source>
</evidence>
<evidence type="ECO:0000303" key="8">
    <source>
    </source>
</evidence>
<evidence type="ECO:0000303" key="9">
    <source>
    </source>
</evidence>
<evidence type="ECO:0000303" key="10">
    <source>
    </source>
</evidence>
<evidence type="ECO:0000303" key="11">
    <source ref="2"/>
</evidence>
<evidence type="ECO:0000305" key="12"/>
<evidence type="ECO:0000312" key="13">
    <source>
        <dbReference type="HGNC" id="HGNC:29181"/>
    </source>
</evidence>
<evidence type="ECO:0007744" key="14">
    <source>
    </source>
</evidence>
<evidence type="ECO:0007744" key="15">
    <source>
    </source>
</evidence>
<evidence type="ECO:0007744" key="16">
    <source>
    </source>
</evidence>
<accession>Q9BQ70</accession>
<accession>Q2MK75</accession>
<accession>Q9UPV3</accession>
<organism>
    <name type="scientific">Homo sapiens</name>
    <name type="common">Human</name>
    <dbReference type="NCBI Taxonomy" id="9606"/>
    <lineage>
        <taxon>Eukaryota</taxon>
        <taxon>Metazoa</taxon>
        <taxon>Chordata</taxon>
        <taxon>Craniata</taxon>
        <taxon>Vertebrata</taxon>
        <taxon>Euteleostomi</taxon>
        <taxon>Mammalia</taxon>
        <taxon>Eutheria</taxon>
        <taxon>Euarchontoglires</taxon>
        <taxon>Primates</taxon>
        <taxon>Haplorrhini</taxon>
        <taxon>Catarrhini</taxon>
        <taxon>Hominidae</taxon>
        <taxon>Homo</taxon>
    </lineage>
</organism>
<feature type="chain" id="PRO_0000087265" description="Ribosome quality control complex subunit TCF25">
    <location>
        <begin position="1"/>
        <end position="676"/>
    </location>
</feature>
<feature type="region of interest" description="Disordered" evidence="3">
    <location>
        <begin position="1"/>
        <end position="59"/>
    </location>
</feature>
<feature type="region of interest" description="Disordered" evidence="3">
    <location>
        <begin position="85"/>
        <end position="147"/>
    </location>
</feature>
<feature type="compositionally biased region" description="Basic residues" evidence="3">
    <location>
        <begin position="123"/>
        <end position="136"/>
    </location>
</feature>
<feature type="modified residue" description="Phosphoserine" evidence="14 15 16">
    <location>
        <position position="602"/>
    </location>
</feature>
<keyword id="KW-0963">Cytoplasm</keyword>
<keyword id="KW-0539">Nucleus</keyword>
<keyword id="KW-0597">Phosphoprotein</keyword>
<keyword id="KW-1267">Proteomics identification</keyword>
<keyword id="KW-1185">Reference proteome</keyword>
<keyword id="KW-0678">Repressor</keyword>
<keyword id="KW-0804">Transcription</keyword>
<keyword id="KW-0805">Transcription regulation</keyword>
<gene>
    <name evidence="10 13" type="primary">TCF25</name>
    <name evidence="8" type="synonym">KIAA1049</name>
    <name evidence="9" type="synonym">NULP1</name>
    <name evidence="11" type="ORF">FKSG26</name>
</gene>
<sequence>MSRRALRRLRGEQRGQEPLGPGALHFDLRDDDDAEEEGPKRELGVRRPGGAGKEGVRVNNRFELINIDDLEDDPVVNGERSGCALTDAVAPGNKGRGQRGNTESKTDGDDTETVPSEQSHASGKLRKKKKKQKNKKSSTGEASENGLEDIDRILERIEDSTGLNRPGPAPLSSRKHVLYVEHRHLNPDTELKRYFGARAILGEQRPRQRQRVYPKCTWLTTPKSTWPRYSKPGLSMRLLESKKGLSFFAFEHSEEYQQAQHKFLVAVESMEPNNIVVLLQTSPYHVDSLLQLSDACRFQEDQEMARDLVERALYSMECAFHPLFSLTSGACRLDYRRPENRSFYLALYKQMSFLEKRGCPRTALEYCKLILSLEPDEDPLCMLLLIDHLALRARNYEYLIRLFQEWEAHRNLSQLPNFAFSVPLAYFLLSQQTDLPECEQSSARQKASLLIQQALTMFPGVLLPLLESCSVRPDASVSSHRFFGPNAEISQPPALSQLVNLYLGRSHFLWKEPATMSWLEENVHEVLQAVDAGDPAVEACENRRKVLYQRAPRNIHRHVILSEIKEAVAALPPDVTTQSVMGFDPLPPSDTIYSYVRPERLSPISHGNTIALFFRSLLPNYTMEGERPEEGVAGGLNRNQGLNRLMLAVRDMMANFHLNDLEAPHEDDAEGEGEWD</sequence>
<protein>
    <recommendedName>
        <fullName evidence="12">Ribosome quality control complex subunit TCF25</fullName>
    </recommendedName>
    <alternativeName>
        <fullName evidence="9">Nuclear localized protein 1</fullName>
    </alternativeName>
    <alternativeName>
        <fullName evidence="12">Transcription factor 25</fullName>
        <shortName>TCF-25</shortName>
    </alternativeName>
</protein>
<name>TCF25_HUMAN</name>
<proteinExistence type="evidence at protein level"/>